<accession>B1XCV6</accession>
<proteinExistence type="inferred from homology"/>
<reference key="1">
    <citation type="journal article" date="2008" name="J. Bacteriol.">
        <title>The complete genome sequence of Escherichia coli DH10B: insights into the biology of a laboratory workhorse.</title>
        <authorList>
            <person name="Durfee T."/>
            <person name="Nelson R."/>
            <person name="Baldwin S."/>
            <person name="Plunkett G. III"/>
            <person name="Burland V."/>
            <person name="Mau B."/>
            <person name="Petrosino J.F."/>
            <person name="Qin X."/>
            <person name="Muzny D.M."/>
            <person name="Ayele M."/>
            <person name="Gibbs R.A."/>
            <person name="Csorgo B."/>
            <person name="Posfai G."/>
            <person name="Weinstock G.M."/>
            <person name="Blattner F.R."/>
        </authorList>
    </citation>
    <scope>NUCLEOTIDE SEQUENCE [LARGE SCALE GENOMIC DNA]</scope>
    <source>
        <strain>K12 / DH10B</strain>
    </source>
</reference>
<sequence>MTRIKINARRIFSLLIPFFFFTSVHAEQTAAPAKPVTVEAKNETFAPQHPDQYLSWKATSEQSERVDALAEDPRLVILWAGYPFSRDYNKPRGHAFAVTDVRETLRTGAPKNAEDGPLPMACWSCKSPDVARLIQKDGEDGYFHGKWARGGPEIVNNLGCADCHNTASPEFAKGKPELTLSRPYAARAMEAIGKPFEKAGRFDQQSMVCGQCHVEYYFDGKNKAVKFPWDDGMKVENMEQYYDKIAFSDWTNSLSKTPMLKAQHPEYETWTAGIHGKNNVTCIDCHMPKVQNAEGKLYTDHKIGNPFDNFAQTCANCHTQDKAALQKVVAERKQSINDLKIKVEDQLVHAHFEAKAALDAGATEAEMKPIQDDIRHAQWRWDLAIASHGIHMHAPEEGLRMLGTAMDKAADARTKLARLLATKGITHEIQIPDISTKEKAQQAIGLNMEQIKAEKQDFIKTVIPQWEEQARKNGLLSQ</sequence>
<organism>
    <name type="scientific">Escherichia coli (strain K12 / DH10B)</name>
    <dbReference type="NCBI Taxonomy" id="316385"/>
    <lineage>
        <taxon>Bacteria</taxon>
        <taxon>Pseudomonadati</taxon>
        <taxon>Pseudomonadota</taxon>
        <taxon>Gammaproteobacteria</taxon>
        <taxon>Enterobacterales</taxon>
        <taxon>Enterobacteriaceae</taxon>
        <taxon>Escherichia</taxon>
    </lineage>
</organism>
<dbReference type="EC" id="1.7.2.2" evidence="1"/>
<dbReference type="EMBL" id="CP000948">
    <property type="protein sequence ID" value="ACB05067.1"/>
    <property type="molecule type" value="Genomic_DNA"/>
</dbReference>
<dbReference type="RefSeq" id="WP_000196875.1">
    <property type="nucleotide sequence ID" value="NC_010473.1"/>
</dbReference>
<dbReference type="SMR" id="B1XCV6"/>
<dbReference type="GeneID" id="93777759"/>
<dbReference type="KEGG" id="ecd:ECDH10B_4260"/>
<dbReference type="HOGENOM" id="CLU_035040_1_0_6"/>
<dbReference type="UniPathway" id="UPA00653"/>
<dbReference type="GO" id="GO:0030288">
    <property type="term" value="C:outer membrane-bounded periplasmic space"/>
    <property type="evidence" value="ECO:0007669"/>
    <property type="project" value="TreeGrafter"/>
</dbReference>
<dbReference type="GO" id="GO:0005509">
    <property type="term" value="F:calcium ion binding"/>
    <property type="evidence" value="ECO:0007669"/>
    <property type="project" value="UniProtKB-UniRule"/>
</dbReference>
<dbReference type="GO" id="GO:0020037">
    <property type="term" value="F:heme binding"/>
    <property type="evidence" value="ECO:0007669"/>
    <property type="project" value="InterPro"/>
</dbReference>
<dbReference type="GO" id="GO:0005506">
    <property type="term" value="F:iron ion binding"/>
    <property type="evidence" value="ECO:0007669"/>
    <property type="project" value="UniProtKB-UniRule"/>
</dbReference>
<dbReference type="GO" id="GO:0042279">
    <property type="term" value="F:nitrite reductase (cytochrome, ammonia-forming) activity"/>
    <property type="evidence" value="ECO:0007669"/>
    <property type="project" value="UniProtKB-UniRule"/>
</dbReference>
<dbReference type="GO" id="GO:0019645">
    <property type="term" value="P:anaerobic electron transport chain"/>
    <property type="evidence" value="ECO:0007669"/>
    <property type="project" value="TreeGrafter"/>
</dbReference>
<dbReference type="GO" id="GO:0042128">
    <property type="term" value="P:nitrate assimilation"/>
    <property type="evidence" value="ECO:0007669"/>
    <property type="project" value="UniProtKB-UniRule"/>
</dbReference>
<dbReference type="CDD" id="cd00548">
    <property type="entry name" value="NrfA-like"/>
    <property type="match status" value="1"/>
</dbReference>
<dbReference type="FunFam" id="1.10.1130.10:FF:000002">
    <property type="entry name" value="Cytochrome c-552"/>
    <property type="match status" value="1"/>
</dbReference>
<dbReference type="FunFam" id="1.20.140.10:FF:000014">
    <property type="entry name" value="Cytochrome c-552"/>
    <property type="match status" value="1"/>
</dbReference>
<dbReference type="Gene3D" id="1.20.140.10">
    <property type="entry name" value="Butyryl-CoA Dehydrogenase, subunit A, domain 3"/>
    <property type="match status" value="1"/>
</dbReference>
<dbReference type="Gene3D" id="1.10.1130.10">
    <property type="entry name" value="Flavocytochrome C3, Chain A"/>
    <property type="match status" value="1"/>
</dbReference>
<dbReference type="HAMAP" id="MF_01182">
    <property type="entry name" value="Cytochrom_C552"/>
    <property type="match status" value="1"/>
</dbReference>
<dbReference type="InterPro" id="IPR003321">
    <property type="entry name" value="Cyt_c552"/>
</dbReference>
<dbReference type="InterPro" id="IPR017570">
    <property type="entry name" value="Cyt_c_NO2Rdtase_formate-dep"/>
</dbReference>
<dbReference type="InterPro" id="IPR036280">
    <property type="entry name" value="Multihaem_cyt_sf"/>
</dbReference>
<dbReference type="NCBIfam" id="TIGR03152">
    <property type="entry name" value="cyto_c552_HCOOH"/>
    <property type="match status" value="1"/>
</dbReference>
<dbReference type="NCBIfam" id="NF008339">
    <property type="entry name" value="PRK11125.1"/>
    <property type="match status" value="1"/>
</dbReference>
<dbReference type="PANTHER" id="PTHR30633:SF0">
    <property type="entry name" value="CYTOCHROME C-552"/>
    <property type="match status" value="1"/>
</dbReference>
<dbReference type="PANTHER" id="PTHR30633">
    <property type="entry name" value="CYTOCHROME C-552 RESPIRATORY NITRITE REDUCTASE"/>
    <property type="match status" value="1"/>
</dbReference>
<dbReference type="Pfam" id="PF02335">
    <property type="entry name" value="Cytochrom_C552"/>
    <property type="match status" value="1"/>
</dbReference>
<dbReference type="PIRSF" id="PIRSF000243">
    <property type="entry name" value="Cyt_c552"/>
    <property type="match status" value="1"/>
</dbReference>
<dbReference type="SUPFAM" id="SSF48695">
    <property type="entry name" value="Multiheme cytochromes"/>
    <property type="match status" value="1"/>
</dbReference>
<dbReference type="PROSITE" id="PS51008">
    <property type="entry name" value="MULTIHEME_CYTC"/>
    <property type="match status" value="1"/>
</dbReference>
<name>NRFA_ECODH</name>
<feature type="signal peptide" evidence="1">
    <location>
        <begin position="1"/>
        <end position="26"/>
    </location>
</feature>
<feature type="chain" id="PRO_1000138213" description="Cytochrome c-552">
    <location>
        <begin position="27"/>
        <end position="478"/>
    </location>
</feature>
<feature type="binding site" description="axial binding residue" evidence="1">
    <location>
        <position position="94"/>
    </location>
    <ligand>
        <name>heme c</name>
        <dbReference type="ChEBI" id="CHEBI:61717"/>
        <label>3</label>
    </ligand>
    <ligandPart>
        <name>Fe</name>
        <dbReference type="ChEBI" id="CHEBI:18248"/>
    </ligandPart>
</feature>
<feature type="binding site" description="covalent" evidence="1">
    <location>
        <position position="122"/>
    </location>
    <ligand>
        <name>heme</name>
        <dbReference type="ChEBI" id="CHEBI:30413"/>
        <label>1</label>
    </ligand>
</feature>
<feature type="binding site" description="covalent" evidence="1">
    <location>
        <position position="125"/>
    </location>
    <ligand>
        <name>heme</name>
        <dbReference type="ChEBI" id="CHEBI:30413"/>
        <label>1</label>
    </ligand>
</feature>
<feature type="binding site" description="axial binding residue" evidence="1">
    <location>
        <position position="126"/>
    </location>
    <ligand>
        <name>heme</name>
        <dbReference type="ChEBI" id="CHEBI:30413"/>
        <label>1</label>
    </ligand>
    <ligandPart>
        <name>Fe</name>
        <dbReference type="ChEBI" id="CHEBI:18248"/>
    </ligandPart>
</feature>
<feature type="binding site" description="covalent" evidence="1">
    <location>
        <position position="160"/>
    </location>
    <ligand>
        <name>heme c</name>
        <dbReference type="ChEBI" id="CHEBI:61717"/>
        <label>2</label>
    </ligand>
</feature>
<feature type="binding site" description="covalent" evidence="1">
    <location>
        <position position="163"/>
    </location>
    <ligand>
        <name>heme c</name>
        <dbReference type="ChEBI" id="CHEBI:61717"/>
        <label>2</label>
    </ligand>
</feature>
<feature type="binding site" description="axial binding residue" evidence="1">
    <location>
        <position position="164"/>
    </location>
    <ligand>
        <name>heme c</name>
        <dbReference type="ChEBI" id="CHEBI:61717"/>
        <label>2</label>
    </ligand>
    <ligandPart>
        <name>Fe</name>
        <dbReference type="ChEBI" id="CHEBI:18248"/>
    </ligandPart>
</feature>
<feature type="binding site" description="covalent" evidence="1">
    <location>
        <position position="209"/>
    </location>
    <ligand>
        <name>heme c</name>
        <dbReference type="ChEBI" id="CHEBI:61717"/>
        <label>3</label>
    </ligand>
</feature>
<feature type="binding site" description="covalent" evidence="1">
    <location>
        <position position="212"/>
    </location>
    <ligand>
        <name>heme c</name>
        <dbReference type="ChEBI" id="CHEBI:61717"/>
        <label>3</label>
    </ligand>
</feature>
<feature type="binding site" description="axial binding residue" evidence="1">
    <location>
        <position position="213"/>
    </location>
    <ligand>
        <name>heme c</name>
        <dbReference type="ChEBI" id="CHEBI:61717"/>
        <label>3</label>
    </ligand>
    <ligandPart>
        <name>Fe</name>
        <dbReference type="ChEBI" id="CHEBI:18248"/>
    </ligandPart>
</feature>
<feature type="binding site" evidence="1">
    <location>
        <position position="215"/>
    </location>
    <ligand>
        <name>Ca(2+)</name>
        <dbReference type="ChEBI" id="CHEBI:29108"/>
    </ligand>
</feature>
<feature type="binding site" evidence="1">
    <location>
        <position position="216"/>
    </location>
    <ligand>
        <name>Ca(2+)</name>
        <dbReference type="ChEBI" id="CHEBI:29108"/>
    </ligand>
</feature>
<feature type="binding site" evidence="1">
    <location>
        <position position="216"/>
    </location>
    <ligand>
        <name>substrate</name>
    </ligand>
</feature>
<feature type="binding site" evidence="1">
    <location>
        <position position="261"/>
    </location>
    <ligand>
        <name>Ca(2+)</name>
        <dbReference type="ChEBI" id="CHEBI:29108"/>
    </ligand>
</feature>
<feature type="binding site" evidence="1">
    <location>
        <position position="263"/>
    </location>
    <ligand>
        <name>Ca(2+)</name>
        <dbReference type="ChEBI" id="CHEBI:29108"/>
    </ligand>
</feature>
<feature type="binding site" evidence="1">
    <location>
        <position position="264"/>
    </location>
    <ligand>
        <name>substrate</name>
    </ligand>
</feature>
<feature type="binding site" description="axial binding residue" evidence="1">
    <location>
        <position position="275"/>
    </location>
    <ligand>
        <name>heme c</name>
        <dbReference type="ChEBI" id="CHEBI:61717"/>
        <label>5</label>
    </ligand>
    <ligandPart>
        <name>Fe</name>
        <dbReference type="ChEBI" id="CHEBI:18248"/>
    </ligandPart>
</feature>
<feature type="binding site" description="covalent" evidence="1">
    <location>
        <position position="282"/>
    </location>
    <ligand>
        <name>heme c</name>
        <dbReference type="ChEBI" id="CHEBI:61717"/>
        <label>4</label>
    </ligand>
</feature>
<feature type="binding site" description="covalent" evidence="1">
    <location>
        <position position="285"/>
    </location>
    <ligand>
        <name>heme c</name>
        <dbReference type="ChEBI" id="CHEBI:61717"/>
        <label>4</label>
    </ligand>
</feature>
<feature type="binding site" description="axial binding residue" evidence="1">
    <location>
        <position position="286"/>
    </location>
    <ligand>
        <name>heme c</name>
        <dbReference type="ChEBI" id="CHEBI:61717"/>
        <label>4</label>
    </ligand>
    <ligandPart>
        <name>Fe</name>
        <dbReference type="ChEBI" id="CHEBI:18248"/>
    </ligandPart>
</feature>
<feature type="binding site" description="axial binding residue" evidence="1">
    <location>
        <position position="301"/>
    </location>
    <ligand>
        <name>heme c</name>
        <dbReference type="ChEBI" id="CHEBI:61717"/>
        <label>2</label>
    </ligand>
    <ligandPart>
        <name>Fe</name>
        <dbReference type="ChEBI" id="CHEBI:18248"/>
    </ligandPart>
</feature>
<feature type="binding site" description="covalent" evidence="1">
    <location>
        <position position="314"/>
    </location>
    <ligand>
        <name>heme c</name>
        <dbReference type="ChEBI" id="CHEBI:61717"/>
        <label>5</label>
    </ligand>
</feature>
<feature type="binding site" description="covalent" evidence="1">
    <location>
        <position position="317"/>
    </location>
    <ligand>
        <name>heme c</name>
        <dbReference type="ChEBI" id="CHEBI:61717"/>
        <label>5</label>
    </ligand>
</feature>
<feature type="binding site" description="axial binding residue" evidence="1">
    <location>
        <position position="318"/>
    </location>
    <ligand>
        <name>heme c</name>
        <dbReference type="ChEBI" id="CHEBI:61717"/>
        <label>5</label>
    </ligand>
    <ligandPart>
        <name>Fe</name>
        <dbReference type="ChEBI" id="CHEBI:18248"/>
    </ligandPart>
</feature>
<feature type="binding site" description="axial binding residue" evidence="1">
    <location>
        <position position="393"/>
    </location>
    <ligand>
        <name>heme c</name>
        <dbReference type="ChEBI" id="CHEBI:61717"/>
        <label>4</label>
    </ligand>
    <ligandPart>
        <name>Fe</name>
        <dbReference type="ChEBI" id="CHEBI:18248"/>
    </ligandPart>
</feature>
<protein>
    <recommendedName>
        <fullName evidence="1">Cytochrome c-552</fullName>
        <ecNumber evidence="1">1.7.2.2</ecNumber>
    </recommendedName>
    <alternativeName>
        <fullName evidence="1">Ammonia-forming cytochrome c nitrite reductase</fullName>
        <shortName evidence="1">Cytochrome c nitrite reductase</shortName>
    </alternativeName>
</protein>
<comment type="function">
    <text evidence="1">Catalyzes the reduction of nitrite to ammonia, consuming six electrons in the process.</text>
</comment>
<comment type="catalytic activity">
    <reaction evidence="1">
        <text>6 Fe(III)-[cytochrome c] + NH4(+) + 2 H2O = 6 Fe(II)-[cytochrome c] + nitrite + 8 H(+)</text>
        <dbReference type="Rhea" id="RHEA:13089"/>
        <dbReference type="Rhea" id="RHEA-COMP:10350"/>
        <dbReference type="Rhea" id="RHEA-COMP:14399"/>
        <dbReference type="ChEBI" id="CHEBI:15377"/>
        <dbReference type="ChEBI" id="CHEBI:15378"/>
        <dbReference type="ChEBI" id="CHEBI:16301"/>
        <dbReference type="ChEBI" id="CHEBI:28938"/>
        <dbReference type="ChEBI" id="CHEBI:29033"/>
        <dbReference type="ChEBI" id="CHEBI:29034"/>
        <dbReference type="EC" id="1.7.2.2"/>
    </reaction>
</comment>
<comment type="cofactor">
    <cofactor evidence="1">
        <name>Ca(2+)</name>
        <dbReference type="ChEBI" id="CHEBI:29108"/>
    </cofactor>
    <text evidence="1">Binds 1 Ca(2+) ion per monomer.</text>
</comment>
<comment type="cofactor">
    <cofactor evidence="1">
        <name>heme c</name>
        <dbReference type="ChEBI" id="CHEBI:61717"/>
    </cofactor>
    <text evidence="1">Binds 5 heme c groups covalently per monomer.</text>
</comment>
<comment type="pathway">
    <text evidence="1">Nitrogen metabolism; nitrate reduction (assimilation).</text>
</comment>
<comment type="subcellular location">
    <subcellularLocation>
        <location evidence="1">Periplasm</location>
    </subcellularLocation>
</comment>
<comment type="similarity">
    <text evidence="1">Belongs to the cytochrome c-552 family.</text>
</comment>
<gene>
    <name evidence="1" type="primary">nrfA</name>
    <name type="ordered locus">ECDH10B_4260</name>
</gene>
<evidence type="ECO:0000255" key="1">
    <source>
        <dbReference type="HAMAP-Rule" id="MF_01182"/>
    </source>
</evidence>
<keyword id="KW-0106">Calcium</keyword>
<keyword id="KW-0249">Electron transport</keyword>
<keyword id="KW-0349">Heme</keyword>
<keyword id="KW-0408">Iron</keyword>
<keyword id="KW-0479">Metal-binding</keyword>
<keyword id="KW-0560">Oxidoreductase</keyword>
<keyword id="KW-0574">Periplasm</keyword>
<keyword id="KW-0732">Signal</keyword>
<keyword id="KW-0813">Transport</keyword>